<organism>
    <name type="scientific">Caenorhabditis elegans</name>
    <dbReference type="NCBI Taxonomy" id="6239"/>
    <lineage>
        <taxon>Eukaryota</taxon>
        <taxon>Metazoa</taxon>
        <taxon>Ecdysozoa</taxon>
        <taxon>Nematoda</taxon>
        <taxon>Chromadorea</taxon>
        <taxon>Rhabditida</taxon>
        <taxon>Rhabditina</taxon>
        <taxon>Rhabditomorpha</taxon>
        <taxon>Rhabditoidea</taxon>
        <taxon>Rhabditidae</taxon>
        <taxon>Peloderinae</taxon>
        <taxon>Caenorhabditis</taxon>
    </lineage>
</organism>
<gene>
    <name type="primary">chc-1</name>
    <name type="ORF">T20G5.1</name>
</gene>
<proteinExistence type="evidence at protein level"/>
<accession>P34574</accession>
<evidence type="ECO:0000250" key="1"/>
<evidence type="ECO:0000250" key="2">
    <source>
        <dbReference type="UniProtKB" id="Q00610"/>
    </source>
</evidence>
<evidence type="ECO:0000256" key="3">
    <source>
        <dbReference type="SAM" id="MobiDB-lite"/>
    </source>
</evidence>
<evidence type="ECO:0000269" key="4">
    <source>
    </source>
</evidence>
<evidence type="ECO:0000269" key="5">
    <source>
    </source>
</evidence>
<evidence type="ECO:0000305" key="6"/>
<feature type="chain" id="PRO_0000205781" description="Probable clathrin heavy chain 1">
    <location>
        <begin position="1"/>
        <end position="1681"/>
    </location>
</feature>
<feature type="repeat" description="CHCR 1">
    <location>
        <begin position="539"/>
        <end position="685"/>
    </location>
</feature>
<feature type="repeat" description="CHCR 2">
    <location>
        <begin position="688"/>
        <end position="830"/>
    </location>
</feature>
<feature type="repeat" description="CHCR 3">
    <location>
        <begin position="835"/>
        <end position="974"/>
    </location>
</feature>
<feature type="repeat" description="CHCR 4">
    <location>
        <begin position="981"/>
        <end position="1126"/>
    </location>
</feature>
<feature type="repeat" description="CHCR 5">
    <location>
        <begin position="1130"/>
        <end position="1271"/>
    </location>
</feature>
<feature type="repeat" description="CHCR 6">
    <location>
        <begin position="1276"/>
        <end position="1422"/>
    </location>
</feature>
<feature type="repeat" description="CHCR 7">
    <location>
        <begin position="1425"/>
        <end position="1568"/>
    </location>
</feature>
<feature type="region of interest" description="WD40-like repeat 1">
    <location>
        <begin position="22"/>
        <end position="65"/>
    </location>
</feature>
<feature type="region of interest" description="WD40-like repeat 2">
    <location>
        <begin position="66"/>
        <end position="105"/>
    </location>
</feature>
<feature type="region of interest" description="WD40-like repeat 3">
    <location>
        <begin position="106"/>
        <end position="147"/>
    </location>
</feature>
<feature type="region of interest" description="WD40-like repeat 4">
    <location>
        <begin position="148"/>
        <end position="193"/>
    </location>
</feature>
<feature type="region of interest" description="WD40-like repeat 5">
    <location>
        <begin position="194"/>
        <end position="255"/>
    </location>
</feature>
<feature type="region of interest" description="WD40-like repeat 6">
    <location>
        <begin position="256"/>
        <end position="299"/>
    </location>
</feature>
<feature type="region of interest" description="WD40-like repeat 7">
    <location>
        <begin position="300"/>
        <end position="328"/>
    </location>
</feature>
<feature type="region of interest" description="Disordered" evidence="3">
    <location>
        <begin position="1616"/>
        <end position="1635"/>
    </location>
</feature>
<feature type="compositionally biased region" description="Basic and acidic residues" evidence="3">
    <location>
        <begin position="1616"/>
        <end position="1628"/>
    </location>
</feature>
<keyword id="KW-0168">Coated pit</keyword>
<keyword id="KW-0968">Cytoplasmic vesicle</keyword>
<keyword id="KW-0472">Membrane</keyword>
<keyword id="KW-1185">Reference proteome</keyword>
<keyword id="KW-0677">Repeat</keyword>
<sequence>MALPIKFHEHLQLPNAGIRVPNITFSNVTMESDKNIVVREMIGDQQQVVIIDLADTANPTRRPISADSVIMHPTAKILALKSGKTLQIFNIELKAKVKAHQNVEDVVYWKWISEKTIALVSDTAVYHWSIEGDAAPVKMFDRHQSLAGTQIINYRADAENKWLVLIGISAKDSRVVGSMQLYSTERKVSQPIEGHAACFVRFKVDGNQNPSNLFCFSVKTDNGGKLHVIEVGTPAAGNTPFQKKNVDVPYTADTAGDFPVSMQVSAKQGIIYLVTKQGYVHLYDVESGTRIYSNRISTDTVFVTCEYTATGGIMGINRKGQVLSVSIDEANLVPFVTNQLQNPDLALKLAVRCDLPGAEELFVRKFNLLFSNGQFGESAKVAASAPQGILRTPATIQKFQQCPSTGPGPSPLLQYFGILLDQGKLNKYETLELCRPVLAQGRKELITKWLNDQKLECCEELGDLIKPHDVNTALSVYLRGNVPHKVVQSFAETGQFDKIVMYAKRVGFQPDYLFQLRQILRNSNPDHGAKFAQLLVSESENGEPLADLSQIIDCFMEVQAVQPCTSFLLEVLKGDKPEEGHLQTRLLEMNLLAAPAVADAILANKMFSHYDRAAIGQLCEKAGLLQRALEHFTDLYDIKRTVVHTHLLKPDWLVGYFGSLSVEDSVECLKAMLTQNIRQNLQVVVQIASKYHEQLGADKLIEMFENHKSYEGLFYFLGSIVNFSQDPEVHFKYIQAATRTGQIKEVERICRESQCYDAERVKNFLKEAKLNDQLPLIIVCDRHNMVHDLVLYLYRNQLQKYIEVFVQKVNAARLPIVVGALLDVDCSEDAIKQLIINTRGKFDIDELVEEVEKRNRLKLLNHWLESKIQEGATDAATHNAMAKIYIDSNNNPERFLKENPYYDSKVVGKYCEKRDPHYAFLSYERGQCDAELINVCNENSLFKNLARYLVKRRDFTLWEQVLNEENVHRRQLIDQVVQTALSETQDPEDISVTVKAFMAADLPNELIELLEKIVLDNSAFSEHRNLQNLLILTAMRADRTRVMEYIQKLDNYDAPDIANIAITSELYEEAFAIFKKFDVNSSAINVLIENVNNLDRAYEFAEKCNQSDVWASLAKAQLQQNLVKEAVDSFIKADDPGAYMEVVNKCSQTEHWEDLVRYLQMARKKSRESYIETELVFALAKTGRLTELEEFIAGPNHAQIGQIGDRCFDNGMFDSAKILFNNVSNFAKLSVTLVRLGEYQGAVDAARKANSTKTWKQVCFSCVENGEFRLAQMCGLHIVVHADELEELINFYQDRGHFEELIALLEAALGLERAHMGMFTELAILYSKYKPEKMREHLELFWSRVNIPKVLRAAEQAHLWSELVFLYDKYEEYDNAALTMMQHPTESWREQHFKEVIAKVANVELYYKAMQFYLDYKPLLLNDLLTVLSPRLDHSRTVLFFNKLKQIPLVKPYLRQVQNLNNKAINEALNQLLIDEEDHAGLRSSIEAQDNFDNITLAQQLEKHPLVEFRRISAYLFKGNNRWKQSIELCKKDKLYKDAMEYAAESRNGELAEELLSFFLDEKLYDCFAASLYHCYDLLHPDVIMELAWKHKIMDYAMPYMIQVMRDYQTRLEKLERSEHERKEEKAEQQQNNGMTMEPQLMLTYGAPAPQMTYPGTTGGYGGQPAYGQPGQPGYNAPGFM</sequence>
<reference key="1">
    <citation type="journal article" date="1998" name="Science">
        <title>Genome sequence of the nematode C. elegans: a platform for investigating biology.</title>
        <authorList>
            <consortium name="The C. elegans sequencing consortium"/>
        </authorList>
    </citation>
    <scope>NUCLEOTIDE SEQUENCE [LARGE SCALE GENOMIC DNA]</scope>
    <source>
        <strain>Bristol N2</strain>
    </source>
</reference>
<reference key="2">
    <citation type="journal article" date="2005" name="J. Biol. Chem.">
        <title>Caenorhabditus elegans arrestin regulates neural G protein signaling and olfactory adaptation and recovery.</title>
        <authorList>
            <person name="Palmitessa A."/>
            <person name="Hess H.A."/>
            <person name="Bany I.A."/>
            <person name="Kim Y.M."/>
            <person name="Koelle M.R."/>
            <person name="Benovic J.L."/>
        </authorList>
    </citation>
    <scope>INTERACTION WITH ARR-1</scope>
</reference>
<reference key="3">
    <citation type="journal article" date="2009" name="PLoS Genet.">
        <title>Requirements for F-BAR proteins TOCA-1 and TOCA-2 in actin dynamics and membrane trafficking during Caenorhabditis elegans oocyte growth and embryonic epidermal morphogenesis.</title>
        <authorList>
            <person name="Giuliani C."/>
            <person name="Troglio F."/>
            <person name="Bai Z."/>
            <person name="Patel F.B."/>
            <person name="Zucconi A."/>
            <person name="Malabarba M.G."/>
            <person name="Disanza A."/>
            <person name="Stradal T.B."/>
            <person name="Cassata G."/>
            <person name="Confalonieri S."/>
            <person name="Hardin J.D."/>
            <person name="Soto M.C."/>
            <person name="Grant B.D."/>
            <person name="Scita G."/>
        </authorList>
    </citation>
    <scope>FUNCTION</scope>
    <scope>DISRUPTION PHENOTYPE</scope>
</reference>
<name>CLH_CAEEL</name>
<protein>
    <recommendedName>
        <fullName>Probable clathrin heavy chain 1</fullName>
    </recommendedName>
</protein>
<comment type="function">
    <text evidence="1 5">Clathrin is the major protein of the polyhedral coat of coated pits and vesicles (By similarity). May play a role in yolk protein clatherin-mediated endocytosis by oocytes during oogenesis (PubMed:19798448).</text>
</comment>
<comment type="subunit">
    <text evidence="2 4">Clathrin triskelions, composed of 3 heavy chains and 3 light chains, are the basic subunits of the clathrin coat (By similarity). May interact with beta arrestin arr-1 (PubMed:15878875).</text>
</comment>
<comment type="subcellular location">
    <subcellularLocation>
        <location evidence="1">Cytoplasmic vesicle membrane</location>
        <topology evidence="1">Peripheral membrane protein</topology>
        <orientation evidence="1">Cytoplasmic side</orientation>
    </subcellularLocation>
    <subcellularLocation>
        <location evidence="1">Membrane</location>
        <location evidence="1">Coated pit</location>
        <topology evidence="1">Peripheral membrane protein</topology>
        <orientation evidence="1">Cytoplasmic side</orientation>
    </subcellularLocation>
    <text evidence="1">Cytoplasmic face of coated pits and vesicles.</text>
</comment>
<comment type="domain">
    <text>The C-terminal third of the heavy chains forms the hub of the triskelion. This region contains the trimerization domain and the light-chain binding domain involved in the assembly of the clathrin lattice.</text>
</comment>
<comment type="domain">
    <text evidence="1">The N-terminal seven-bladed beta-propeller is formed by WD40-like repeats, and projects inward from the polyhedral outer clathrin coat. It constitutes a major protein-protein interaction node (By similarity).</text>
</comment>
<comment type="disruption phenotype">
    <text evidence="5">RNAi-mediated knockdown results in defective endocytosis by oocytes characterized by an accumulation of aggregated yolk protein in the pseudocoelomatic space.</text>
</comment>
<comment type="similarity">
    <text evidence="6">Belongs to the clathrin heavy chain family.</text>
</comment>
<dbReference type="EMBL" id="Z30423">
    <property type="protein sequence ID" value="CAA83003.1"/>
    <property type="molecule type" value="Genomic_DNA"/>
</dbReference>
<dbReference type="PIR" id="S42369">
    <property type="entry name" value="S42369"/>
</dbReference>
<dbReference type="RefSeq" id="NP_499260.1">
    <property type="nucleotide sequence ID" value="NM_066859.5"/>
</dbReference>
<dbReference type="SMR" id="P34574"/>
<dbReference type="BioGRID" id="41628">
    <property type="interactions" value="51"/>
</dbReference>
<dbReference type="DIP" id="DIP-25251N"/>
<dbReference type="FunCoup" id="P34574">
    <property type="interactions" value="3326"/>
</dbReference>
<dbReference type="IntAct" id="P34574">
    <property type="interactions" value="20"/>
</dbReference>
<dbReference type="MINT" id="P34574"/>
<dbReference type="STRING" id="6239.T20G5.1.1"/>
<dbReference type="PaxDb" id="6239-T20G5.1"/>
<dbReference type="PeptideAtlas" id="P34574"/>
<dbReference type="EnsemblMetazoa" id="T20G5.1.1">
    <property type="protein sequence ID" value="T20G5.1.1"/>
    <property type="gene ID" value="WBGene00011867"/>
</dbReference>
<dbReference type="GeneID" id="176434"/>
<dbReference type="KEGG" id="cel:CELE_T20G5.1"/>
<dbReference type="UCSC" id="T20G5.1">
    <property type="organism name" value="c. elegans"/>
</dbReference>
<dbReference type="AGR" id="WB:WBGene00011867"/>
<dbReference type="CTD" id="176434"/>
<dbReference type="WormBase" id="T20G5.1">
    <property type="protein sequence ID" value="CE00480"/>
    <property type="gene ID" value="WBGene00011867"/>
    <property type="gene designation" value="chc-1"/>
</dbReference>
<dbReference type="eggNOG" id="KOG0985">
    <property type="taxonomic scope" value="Eukaryota"/>
</dbReference>
<dbReference type="GeneTree" id="ENSGT00950000183166"/>
<dbReference type="HOGENOM" id="CLU_002136_0_0_1"/>
<dbReference type="InParanoid" id="P34574"/>
<dbReference type="OMA" id="HCYDLLH"/>
<dbReference type="OrthoDB" id="2113814at2759"/>
<dbReference type="PhylomeDB" id="P34574"/>
<dbReference type="Reactome" id="R-CEL-190873">
    <property type="pathway name" value="Gap junction degradation"/>
</dbReference>
<dbReference type="Reactome" id="R-CEL-196025">
    <property type="pathway name" value="Formation of annular gap junctions"/>
</dbReference>
<dbReference type="Reactome" id="R-CEL-3928665">
    <property type="pathway name" value="EPH-ephrin mediated repulsion of cells"/>
</dbReference>
<dbReference type="Reactome" id="R-CEL-432720">
    <property type="pathway name" value="Lysosome Vesicle Biogenesis"/>
</dbReference>
<dbReference type="Reactome" id="R-CEL-432722">
    <property type="pathway name" value="Golgi Associated Vesicle Biogenesis"/>
</dbReference>
<dbReference type="Reactome" id="R-CEL-437239">
    <property type="pathway name" value="Recycling pathway of L1"/>
</dbReference>
<dbReference type="Reactome" id="R-CEL-5099900">
    <property type="pathway name" value="WNT5A-dependent internalization of FZD4"/>
</dbReference>
<dbReference type="Reactome" id="R-CEL-5140745">
    <property type="pathway name" value="WNT5A-dependent internalization of FZD2, FZD5 and ROR2"/>
</dbReference>
<dbReference type="Reactome" id="R-CEL-8856825">
    <property type="pathway name" value="Cargo recognition for clathrin-mediated endocytosis"/>
</dbReference>
<dbReference type="Reactome" id="R-CEL-8856828">
    <property type="pathway name" value="Clathrin-mediated endocytosis"/>
</dbReference>
<dbReference type="Reactome" id="R-CEL-8866427">
    <property type="pathway name" value="VLDLR internalisation and degradation"/>
</dbReference>
<dbReference type="Reactome" id="R-CEL-8964038">
    <property type="pathway name" value="LDL clearance"/>
</dbReference>
<dbReference type="Reactome" id="R-CEL-9013420">
    <property type="pathway name" value="RHOU GTPase cycle"/>
</dbReference>
<dbReference type="Reactome" id="R-CEL-9013424">
    <property type="pathway name" value="RHOV GTPase cycle"/>
</dbReference>
<dbReference type="SignaLink" id="P34574"/>
<dbReference type="PRO" id="PR:P34574"/>
<dbReference type="Proteomes" id="UP000001940">
    <property type="component" value="Chromosome III"/>
</dbReference>
<dbReference type="Bgee" id="WBGene00011867">
    <property type="expression patterns" value="Expressed in pharyngeal muscle cell (C elegans) and 4 other cell types or tissues"/>
</dbReference>
<dbReference type="GO" id="GO:0016324">
    <property type="term" value="C:apical plasma membrane"/>
    <property type="evidence" value="ECO:0000314"/>
    <property type="project" value="WormBase"/>
</dbReference>
<dbReference type="GO" id="GO:0005938">
    <property type="term" value="C:cell cortex"/>
    <property type="evidence" value="ECO:0000314"/>
    <property type="project" value="WormBase"/>
</dbReference>
<dbReference type="GO" id="GO:0030132">
    <property type="term" value="C:clathrin coat of coated pit"/>
    <property type="evidence" value="ECO:0007669"/>
    <property type="project" value="InterPro"/>
</dbReference>
<dbReference type="GO" id="GO:0030130">
    <property type="term" value="C:clathrin coat of trans-Golgi network vesicle"/>
    <property type="evidence" value="ECO:0007669"/>
    <property type="project" value="InterPro"/>
</dbReference>
<dbReference type="GO" id="GO:0071439">
    <property type="term" value="C:clathrin complex"/>
    <property type="evidence" value="ECO:0000318"/>
    <property type="project" value="GO_Central"/>
</dbReference>
<dbReference type="GO" id="GO:0045334">
    <property type="term" value="C:clathrin-coated endocytic vesicle"/>
    <property type="evidence" value="ECO:0000314"/>
    <property type="project" value="WormBase"/>
</dbReference>
<dbReference type="GO" id="GO:0005737">
    <property type="term" value="C:cytoplasm"/>
    <property type="evidence" value="ECO:0000314"/>
    <property type="project" value="WormBase"/>
</dbReference>
<dbReference type="GO" id="GO:0009898">
    <property type="term" value="C:cytoplasmic side of plasma membrane"/>
    <property type="evidence" value="ECO:0000314"/>
    <property type="project" value="WormBase"/>
</dbReference>
<dbReference type="GO" id="GO:0031410">
    <property type="term" value="C:cytoplasmic vesicle"/>
    <property type="evidence" value="ECO:0000314"/>
    <property type="project" value="WormBase"/>
</dbReference>
<dbReference type="GO" id="GO:0030139">
    <property type="term" value="C:endocytic vesicle"/>
    <property type="evidence" value="ECO:0000314"/>
    <property type="project" value="WormBase"/>
</dbReference>
<dbReference type="GO" id="GO:0072686">
    <property type="term" value="C:mitotic spindle"/>
    <property type="evidence" value="ECO:0000314"/>
    <property type="project" value="WormBase"/>
</dbReference>
<dbReference type="GO" id="GO:0005886">
    <property type="term" value="C:plasma membrane"/>
    <property type="evidence" value="ECO:0000314"/>
    <property type="project" value="WormBase"/>
</dbReference>
<dbReference type="GO" id="GO:0032051">
    <property type="term" value="F:clathrin light chain binding"/>
    <property type="evidence" value="ECO:0000318"/>
    <property type="project" value="GO_Central"/>
</dbReference>
<dbReference type="GO" id="GO:0005198">
    <property type="term" value="F:structural molecule activity"/>
    <property type="evidence" value="ECO:0007669"/>
    <property type="project" value="InterPro"/>
</dbReference>
<dbReference type="GO" id="GO:0045176">
    <property type="term" value="P:apical protein localization"/>
    <property type="evidence" value="ECO:0000315"/>
    <property type="project" value="WormBase"/>
</dbReference>
<dbReference type="GO" id="GO:0030866">
    <property type="term" value="P:cortical actin cytoskeleton organization"/>
    <property type="evidence" value="ECO:0000315"/>
    <property type="project" value="WormBase"/>
</dbReference>
<dbReference type="GO" id="GO:0008340">
    <property type="term" value="P:determination of adult lifespan"/>
    <property type="evidence" value="ECO:0000316"/>
    <property type="project" value="UniProtKB"/>
</dbReference>
<dbReference type="GO" id="GO:0009792">
    <property type="term" value="P:embryo development ending in birth or egg hatching"/>
    <property type="evidence" value="ECO:0000315"/>
    <property type="project" value="WormBase"/>
</dbReference>
<dbReference type="GO" id="GO:0006886">
    <property type="term" value="P:intracellular protein transport"/>
    <property type="evidence" value="ECO:0007669"/>
    <property type="project" value="InterPro"/>
</dbReference>
<dbReference type="GO" id="GO:2000370">
    <property type="term" value="P:positive regulation of clathrin-dependent endocytosis"/>
    <property type="evidence" value="ECO:0000315"/>
    <property type="project" value="UniProtKB"/>
</dbReference>
<dbReference type="GO" id="GO:0008104">
    <property type="term" value="P:protein localization"/>
    <property type="evidence" value="ECO:0000315"/>
    <property type="project" value="WormBase"/>
</dbReference>
<dbReference type="GO" id="GO:0006898">
    <property type="term" value="P:receptor-mediated endocytosis"/>
    <property type="evidence" value="ECO:0000315"/>
    <property type="project" value="WormBase"/>
</dbReference>
<dbReference type="FunFam" id="1.25.40.10:FF:000001">
    <property type="entry name" value="Clathrin heavy chain"/>
    <property type="match status" value="1"/>
</dbReference>
<dbReference type="FunFam" id="1.25.40.10:FF:000002">
    <property type="entry name" value="Clathrin heavy chain"/>
    <property type="match status" value="1"/>
</dbReference>
<dbReference type="FunFam" id="1.25.40.10:FF:000005">
    <property type="entry name" value="Clathrin heavy chain"/>
    <property type="match status" value="1"/>
</dbReference>
<dbReference type="FunFam" id="1.25.40.10:FF:000082">
    <property type="entry name" value="Clathrin heavy chain"/>
    <property type="match status" value="1"/>
</dbReference>
<dbReference type="FunFam" id="1.25.40.730:FF:000008">
    <property type="entry name" value="Clathrin heavy chain"/>
    <property type="match status" value="1"/>
</dbReference>
<dbReference type="FunFam" id="2.130.10.110:FF:000009">
    <property type="entry name" value="Clathrin heavy chain"/>
    <property type="match status" value="1"/>
</dbReference>
<dbReference type="Gene3D" id="1.25.40.730">
    <property type="match status" value="1"/>
</dbReference>
<dbReference type="Gene3D" id="2.130.10.110">
    <property type="entry name" value="Clathrin heavy-chain terminal domain"/>
    <property type="match status" value="1"/>
</dbReference>
<dbReference type="Gene3D" id="1.25.40.10">
    <property type="entry name" value="Tetratricopeptide repeat domain"/>
    <property type="match status" value="3"/>
</dbReference>
<dbReference type="InterPro" id="IPR016024">
    <property type="entry name" value="ARM-type_fold"/>
</dbReference>
<dbReference type="InterPro" id="IPR055358">
    <property type="entry name" value="CHCR"/>
</dbReference>
<dbReference type="InterPro" id="IPR000547">
    <property type="entry name" value="Clathrin_H-chain/VPS_repeat"/>
</dbReference>
<dbReference type="InterPro" id="IPR015348">
    <property type="entry name" value="Clathrin_H-chain_linker_core"/>
</dbReference>
<dbReference type="InterPro" id="IPR016025">
    <property type="entry name" value="Clathrin_H-chain_N"/>
</dbReference>
<dbReference type="InterPro" id="IPR022365">
    <property type="entry name" value="Clathrin_H-chain_propeller_rpt"/>
</dbReference>
<dbReference type="InterPro" id="IPR016341">
    <property type="entry name" value="Clathrin_heavy_chain"/>
</dbReference>
<dbReference type="InterPro" id="IPR011990">
    <property type="entry name" value="TPR-like_helical_dom_sf"/>
</dbReference>
<dbReference type="PANTHER" id="PTHR10292:SF1">
    <property type="entry name" value="CLATHRIN HEAVY CHAIN"/>
    <property type="match status" value="1"/>
</dbReference>
<dbReference type="PANTHER" id="PTHR10292">
    <property type="entry name" value="CLATHRIN HEAVY CHAIN RELATED"/>
    <property type="match status" value="1"/>
</dbReference>
<dbReference type="Pfam" id="PF00637">
    <property type="entry name" value="Clathrin"/>
    <property type="match status" value="7"/>
</dbReference>
<dbReference type="Pfam" id="PF09268">
    <property type="entry name" value="Clathrin-link"/>
    <property type="match status" value="1"/>
</dbReference>
<dbReference type="Pfam" id="PF13838">
    <property type="entry name" value="Clathrin_H_link"/>
    <property type="match status" value="1"/>
</dbReference>
<dbReference type="Pfam" id="PF01394">
    <property type="entry name" value="Clathrin_propel"/>
    <property type="match status" value="5"/>
</dbReference>
<dbReference type="PIRSF" id="PIRSF002290">
    <property type="entry name" value="Clathrin_H_chain"/>
    <property type="match status" value="1"/>
</dbReference>
<dbReference type="SMART" id="SM00299">
    <property type="entry name" value="CLH"/>
    <property type="match status" value="7"/>
</dbReference>
<dbReference type="SUPFAM" id="SSF48371">
    <property type="entry name" value="ARM repeat"/>
    <property type="match status" value="6"/>
</dbReference>
<dbReference type="SUPFAM" id="SSF50989">
    <property type="entry name" value="Clathrin heavy-chain terminal domain"/>
    <property type="match status" value="1"/>
</dbReference>
<dbReference type="PROSITE" id="PS50236">
    <property type="entry name" value="CHCR"/>
    <property type="match status" value="7"/>
</dbReference>